<reference key="1">
    <citation type="journal article" date="2007" name="PLoS Genet.">
        <title>Patterns and implications of gene gain and loss in the evolution of Prochlorococcus.</title>
        <authorList>
            <person name="Kettler G.C."/>
            <person name="Martiny A.C."/>
            <person name="Huang K."/>
            <person name="Zucker J."/>
            <person name="Coleman M.L."/>
            <person name="Rodrigue S."/>
            <person name="Chen F."/>
            <person name="Lapidus A."/>
            <person name="Ferriera S."/>
            <person name="Johnson J."/>
            <person name="Steglich C."/>
            <person name="Church G.M."/>
            <person name="Richardson P."/>
            <person name="Chisholm S.W."/>
        </authorList>
    </citation>
    <scope>NUCLEOTIDE SEQUENCE [LARGE SCALE GENOMIC DNA]</scope>
    <source>
        <strain>MIT 9303</strain>
    </source>
</reference>
<name>RNPA_PROM3</name>
<sequence>MVLPASMRLRGSRCFERLQKWGYRFYGTSMVLRVIEADPQLLKAPHRHHNSTACRCAVVISSKVSKRAVIRNRLRRRLHNHLRSRLEVAPEHCNHWVLISLKPVASAIEASPLLEECDRLLHQAGLLS</sequence>
<gene>
    <name evidence="1" type="primary">rnpA</name>
    <name type="ordered locus">P9303_06111</name>
</gene>
<protein>
    <recommendedName>
        <fullName evidence="1">Ribonuclease P protein component</fullName>
        <shortName evidence="1">RNase P protein</shortName>
        <shortName evidence="1">RNaseP protein</shortName>
        <ecNumber evidence="1">3.1.26.5</ecNumber>
    </recommendedName>
    <alternativeName>
        <fullName evidence="1">Protein C5</fullName>
    </alternativeName>
</protein>
<evidence type="ECO:0000255" key="1">
    <source>
        <dbReference type="HAMAP-Rule" id="MF_00227"/>
    </source>
</evidence>
<organism>
    <name type="scientific">Prochlorococcus marinus (strain MIT 9303)</name>
    <dbReference type="NCBI Taxonomy" id="59922"/>
    <lineage>
        <taxon>Bacteria</taxon>
        <taxon>Bacillati</taxon>
        <taxon>Cyanobacteriota</taxon>
        <taxon>Cyanophyceae</taxon>
        <taxon>Synechococcales</taxon>
        <taxon>Prochlorococcaceae</taxon>
        <taxon>Prochlorococcus</taxon>
    </lineage>
</organism>
<keyword id="KW-0255">Endonuclease</keyword>
<keyword id="KW-0378">Hydrolase</keyword>
<keyword id="KW-0540">Nuclease</keyword>
<keyword id="KW-0694">RNA-binding</keyword>
<keyword id="KW-0819">tRNA processing</keyword>
<dbReference type="EC" id="3.1.26.5" evidence="1"/>
<dbReference type="EMBL" id="CP000554">
    <property type="protein sequence ID" value="ABM77363.1"/>
    <property type="molecule type" value="Genomic_DNA"/>
</dbReference>
<dbReference type="RefSeq" id="WP_011825282.1">
    <property type="nucleotide sequence ID" value="NC_008820.1"/>
</dbReference>
<dbReference type="SMR" id="A2C7A3"/>
<dbReference type="STRING" id="59922.P9303_06111"/>
<dbReference type="KEGG" id="pmf:P9303_06111"/>
<dbReference type="HOGENOM" id="CLU_117179_2_0_3"/>
<dbReference type="BioCyc" id="PMAR59922:G1G80-561-MONOMER"/>
<dbReference type="Proteomes" id="UP000002274">
    <property type="component" value="Chromosome"/>
</dbReference>
<dbReference type="GO" id="GO:0030677">
    <property type="term" value="C:ribonuclease P complex"/>
    <property type="evidence" value="ECO:0007669"/>
    <property type="project" value="TreeGrafter"/>
</dbReference>
<dbReference type="GO" id="GO:0042781">
    <property type="term" value="F:3'-tRNA processing endoribonuclease activity"/>
    <property type="evidence" value="ECO:0007669"/>
    <property type="project" value="TreeGrafter"/>
</dbReference>
<dbReference type="GO" id="GO:0004526">
    <property type="term" value="F:ribonuclease P activity"/>
    <property type="evidence" value="ECO:0007669"/>
    <property type="project" value="UniProtKB-UniRule"/>
</dbReference>
<dbReference type="GO" id="GO:0000049">
    <property type="term" value="F:tRNA binding"/>
    <property type="evidence" value="ECO:0007669"/>
    <property type="project" value="UniProtKB-UniRule"/>
</dbReference>
<dbReference type="GO" id="GO:0001682">
    <property type="term" value="P:tRNA 5'-leader removal"/>
    <property type="evidence" value="ECO:0007669"/>
    <property type="project" value="UniProtKB-UniRule"/>
</dbReference>
<dbReference type="Gene3D" id="3.30.230.10">
    <property type="match status" value="1"/>
</dbReference>
<dbReference type="HAMAP" id="MF_00227">
    <property type="entry name" value="RNase_P"/>
    <property type="match status" value="1"/>
</dbReference>
<dbReference type="InterPro" id="IPR020568">
    <property type="entry name" value="Ribosomal_Su5_D2-typ_SF"/>
</dbReference>
<dbReference type="InterPro" id="IPR014721">
    <property type="entry name" value="Ribsml_uS5_D2-typ_fold_subgr"/>
</dbReference>
<dbReference type="InterPro" id="IPR000100">
    <property type="entry name" value="RNase_P"/>
</dbReference>
<dbReference type="PANTHER" id="PTHR33992">
    <property type="entry name" value="RIBONUCLEASE P PROTEIN COMPONENT"/>
    <property type="match status" value="1"/>
</dbReference>
<dbReference type="PANTHER" id="PTHR33992:SF1">
    <property type="entry name" value="RIBONUCLEASE P PROTEIN COMPONENT"/>
    <property type="match status" value="1"/>
</dbReference>
<dbReference type="Pfam" id="PF00825">
    <property type="entry name" value="Ribonuclease_P"/>
    <property type="match status" value="1"/>
</dbReference>
<dbReference type="SUPFAM" id="SSF54211">
    <property type="entry name" value="Ribosomal protein S5 domain 2-like"/>
    <property type="match status" value="1"/>
</dbReference>
<accession>A2C7A3</accession>
<feature type="chain" id="PRO_1000194660" description="Ribonuclease P protein component">
    <location>
        <begin position="1"/>
        <end position="128"/>
    </location>
</feature>
<proteinExistence type="inferred from homology"/>
<comment type="function">
    <text evidence="1">RNaseP catalyzes the removal of the 5'-leader sequence from pre-tRNA to produce the mature 5'-terminus. It can also cleave other RNA substrates such as 4.5S RNA. The protein component plays an auxiliary but essential role in vivo by binding to the 5'-leader sequence and broadening the substrate specificity of the ribozyme.</text>
</comment>
<comment type="catalytic activity">
    <reaction evidence="1">
        <text>Endonucleolytic cleavage of RNA, removing 5'-extranucleotides from tRNA precursor.</text>
        <dbReference type="EC" id="3.1.26.5"/>
    </reaction>
</comment>
<comment type="subunit">
    <text evidence="1">Consists of a catalytic RNA component (M1 or rnpB) and a protein subunit.</text>
</comment>
<comment type="similarity">
    <text evidence="1">Belongs to the RnpA family.</text>
</comment>